<gene>
    <name type="primary">gpa-13</name>
    <name type="ORF">F18E2.5</name>
</gene>
<evidence type="ECO:0000250" key="1"/>
<evidence type="ECO:0000255" key="2"/>
<evidence type="ECO:0000255" key="3">
    <source>
        <dbReference type="PROSITE-ProRule" id="PRU01230"/>
    </source>
</evidence>
<evidence type="ECO:0000305" key="4"/>
<name>GPA13_CAEEL</name>
<protein>
    <recommendedName>
        <fullName>Guanine nucleotide-binding protein alpha-13 subunit</fullName>
    </recommendedName>
</protein>
<feature type="initiator methionine" description="Removed" evidence="2">
    <location>
        <position position="1"/>
    </location>
</feature>
<feature type="chain" id="PRO_0000203651" description="Guanine nucleotide-binding protein alpha-13 subunit">
    <location>
        <begin position="2"/>
        <end position="348"/>
    </location>
</feature>
<feature type="domain" description="G-alpha" evidence="3">
    <location>
        <begin position="34"/>
        <end position="348"/>
    </location>
</feature>
<feature type="region of interest" description="G1 motif" evidence="3">
    <location>
        <begin position="37"/>
        <end position="50"/>
    </location>
</feature>
<feature type="region of interest" description="G2 motif" evidence="3">
    <location>
        <begin position="174"/>
        <end position="182"/>
    </location>
</feature>
<feature type="region of interest" description="G3 motif" evidence="3">
    <location>
        <begin position="197"/>
        <end position="206"/>
    </location>
</feature>
<feature type="region of interest" description="G4 motif" evidence="3">
    <location>
        <begin position="266"/>
        <end position="273"/>
    </location>
</feature>
<feature type="region of interest" description="G5 motif" evidence="3">
    <location>
        <begin position="324"/>
        <end position="329"/>
    </location>
</feature>
<feature type="binding site" evidence="1">
    <location>
        <begin position="42"/>
        <end position="49"/>
    </location>
    <ligand>
        <name>GTP</name>
        <dbReference type="ChEBI" id="CHEBI:37565"/>
    </ligand>
</feature>
<feature type="binding site" evidence="1">
    <location>
        <begin position="176"/>
        <end position="182"/>
    </location>
    <ligand>
        <name>GTP</name>
        <dbReference type="ChEBI" id="CHEBI:37565"/>
    </ligand>
</feature>
<feature type="binding site" evidence="1">
    <location>
        <position position="182"/>
    </location>
    <ligand>
        <name>Mg(2+)</name>
        <dbReference type="ChEBI" id="CHEBI:18420"/>
    </ligand>
</feature>
<feature type="binding site" evidence="1">
    <location>
        <begin position="201"/>
        <end position="205"/>
    </location>
    <ligand>
        <name>GTP</name>
        <dbReference type="ChEBI" id="CHEBI:37565"/>
    </ligand>
</feature>
<feature type="binding site" evidence="1">
    <location>
        <begin position="270"/>
        <end position="273"/>
    </location>
    <ligand>
        <name>GTP</name>
        <dbReference type="ChEBI" id="CHEBI:37565"/>
    </ligand>
</feature>
<feature type="binding site" evidence="1">
    <location>
        <position position="326"/>
    </location>
    <ligand>
        <name>GTP</name>
        <dbReference type="ChEBI" id="CHEBI:37565"/>
    </ligand>
</feature>
<feature type="lipid moiety-binding region" description="N-myristoyl glycine" evidence="2">
    <location>
        <position position="2"/>
    </location>
</feature>
<feature type="lipid moiety-binding region" description="S-palmitoyl cysteine" evidence="2">
    <location>
        <position position="3"/>
    </location>
</feature>
<proteinExistence type="evidence at protein level"/>
<keyword id="KW-0342">GTP-binding</keyword>
<keyword id="KW-0449">Lipoprotein</keyword>
<keyword id="KW-0460">Magnesium</keyword>
<keyword id="KW-0479">Metal-binding</keyword>
<keyword id="KW-0519">Myristate</keyword>
<keyword id="KW-0547">Nucleotide-binding</keyword>
<keyword id="KW-0564">Palmitate</keyword>
<keyword id="KW-1185">Reference proteome</keyword>
<keyword id="KW-0807">Transducer</keyword>
<reference key="1">
    <citation type="submission" date="2000-09" db="EMBL/GenBank/DDBJ databases">
        <title>Interaction analysis of the complete G-alpha subfamily of heterotrimeric G proteins from Caenorhabditis elegans.</title>
        <authorList>
            <person name="Cuppen E."/>
            <person name="Jansen G."/>
            <person name="Plasterk R.H.A."/>
        </authorList>
    </citation>
    <scope>NUCLEOTIDE SEQUENCE [MRNA]</scope>
    <source>
        <strain>Bristol N2</strain>
    </source>
</reference>
<reference key="2">
    <citation type="journal article" date="1998" name="Science">
        <title>Genome sequence of the nematode C. elegans: a platform for investigating biology.</title>
        <authorList>
            <consortium name="The C. elegans sequencing consortium"/>
        </authorList>
    </citation>
    <scope>NUCLEOTIDE SEQUENCE [LARGE SCALE GENOMIC DNA]</scope>
    <source>
        <strain>Bristol N2</strain>
    </source>
</reference>
<reference key="3">
    <citation type="journal article" date="1999" name="Nat. Genet.">
        <title>The complete family of genes encoding G proteins of Caenorhabditis elegans.</title>
        <authorList>
            <person name="Jansen G."/>
            <person name="Thijssen K.L."/>
            <person name="Werner P."/>
            <person name="van der Horst M."/>
            <person name="Hazendonk E."/>
            <person name="Plasterk R.H.A."/>
        </authorList>
    </citation>
    <scope>GENE FAMILY</scope>
    <scope>NOMENCLATURE</scope>
</reference>
<accession>Q9XTB2</accession>
<accession>Q9BIG3</accession>
<dbReference type="EMBL" id="AY008135">
    <property type="protein sequence ID" value="AAG32088.1"/>
    <property type="molecule type" value="mRNA"/>
</dbReference>
<dbReference type="EMBL" id="Z75537">
    <property type="protein sequence ID" value="CAA99838.2"/>
    <property type="molecule type" value="Genomic_DNA"/>
</dbReference>
<dbReference type="EMBL" id="Z75527">
    <property type="protein sequence ID" value="CAA99838.2"/>
    <property type="status" value="JOINED"/>
    <property type="molecule type" value="Genomic_DNA"/>
</dbReference>
<dbReference type="PIR" id="T19312">
    <property type="entry name" value="T19312"/>
</dbReference>
<dbReference type="RefSeq" id="NP_001256450.1">
    <property type="nucleotide sequence ID" value="NM_001269521.2"/>
</dbReference>
<dbReference type="SMR" id="Q9XTB2"/>
<dbReference type="BioGRID" id="44766">
    <property type="interactions" value="3"/>
</dbReference>
<dbReference type="FunCoup" id="Q9XTB2">
    <property type="interactions" value="5"/>
</dbReference>
<dbReference type="IntAct" id="Q9XTB2">
    <property type="interactions" value="2"/>
</dbReference>
<dbReference type="STRING" id="6239.F18E2.5b.1"/>
<dbReference type="PaxDb" id="6239-F18E2.5b"/>
<dbReference type="EnsemblMetazoa" id="F18E2.5a.1">
    <property type="protein sequence ID" value="F18E2.5a.1"/>
    <property type="gene ID" value="WBGene00001675"/>
</dbReference>
<dbReference type="GeneID" id="179746"/>
<dbReference type="KEGG" id="cel:CELE_F18E2.5"/>
<dbReference type="UCSC" id="F18E2.5">
    <property type="organism name" value="c. elegans"/>
</dbReference>
<dbReference type="AGR" id="WB:WBGene00001675"/>
<dbReference type="CTD" id="179746"/>
<dbReference type="WormBase" id="F18E2.5a">
    <property type="protein sequence ID" value="CE30659"/>
    <property type="gene ID" value="WBGene00001675"/>
    <property type="gene designation" value="gpa-13"/>
</dbReference>
<dbReference type="eggNOG" id="KOG0082">
    <property type="taxonomic scope" value="Eukaryota"/>
</dbReference>
<dbReference type="GeneTree" id="ENSGT00970000196172"/>
<dbReference type="HOGENOM" id="CLU_014184_6_0_1"/>
<dbReference type="InParanoid" id="Q9XTB2"/>
<dbReference type="OrthoDB" id="5817230at2759"/>
<dbReference type="PhylomeDB" id="Q9XTB2"/>
<dbReference type="PRO" id="PR:Q9XTB2"/>
<dbReference type="Proteomes" id="UP000001940">
    <property type="component" value="Chromosome V"/>
</dbReference>
<dbReference type="ExpressionAtlas" id="Q9XTB2">
    <property type="expression patterns" value="baseline and differential"/>
</dbReference>
<dbReference type="GO" id="GO:0030424">
    <property type="term" value="C:axon"/>
    <property type="evidence" value="ECO:0000314"/>
    <property type="project" value="WormBase"/>
</dbReference>
<dbReference type="GO" id="GO:0005737">
    <property type="term" value="C:cytoplasm"/>
    <property type="evidence" value="ECO:0000318"/>
    <property type="project" value="GO_Central"/>
</dbReference>
<dbReference type="GO" id="GO:0005834">
    <property type="term" value="C:heterotrimeric G-protein complex"/>
    <property type="evidence" value="ECO:0000318"/>
    <property type="project" value="GO_Central"/>
</dbReference>
<dbReference type="GO" id="GO:0043025">
    <property type="term" value="C:neuronal cell body"/>
    <property type="evidence" value="ECO:0000314"/>
    <property type="project" value="WormBase"/>
</dbReference>
<dbReference type="GO" id="GO:0097730">
    <property type="term" value="C:non-motile cilium"/>
    <property type="evidence" value="ECO:0000314"/>
    <property type="project" value="WormBase"/>
</dbReference>
<dbReference type="GO" id="GO:0001664">
    <property type="term" value="F:G protein-coupled receptor binding"/>
    <property type="evidence" value="ECO:0000318"/>
    <property type="project" value="GO_Central"/>
</dbReference>
<dbReference type="GO" id="GO:0001965">
    <property type="term" value="F:G-protein alpha-subunit binding"/>
    <property type="evidence" value="ECO:0000353"/>
    <property type="project" value="WormBase"/>
</dbReference>
<dbReference type="GO" id="GO:0031683">
    <property type="term" value="F:G-protein beta/gamma-subunit complex binding"/>
    <property type="evidence" value="ECO:0000318"/>
    <property type="project" value="GO_Central"/>
</dbReference>
<dbReference type="GO" id="GO:0005525">
    <property type="term" value="F:GTP binding"/>
    <property type="evidence" value="ECO:0007669"/>
    <property type="project" value="UniProtKB-KW"/>
</dbReference>
<dbReference type="GO" id="GO:0003924">
    <property type="term" value="F:GTPase activity"/>
    <property type="evidence" value="ECO:0000318"/>
    <property type="project" value="GO_Central"/>
</dbReference>
<dbReference type="GO" id="GO:0046872">
    <property type="term" value="F:metal ion binding"/>
    <property type="evidence" value="ECO:0007669"/>
    <property type="project" value="UniProtKB-KW"/>
</dbReference>
<dbReference type="GO" id="GO:0007188">
    <property type="term" value="P:adenylate cyclase-modulating G protein-coupled receptor signaling pathway"/>
    <property type="evidence" value="ECO:0000318"/>
    <property type="project" value="GO_Central"/>
</dbReference>
<dbReference type="CDD" id="cd00066">
    <property type="entry name" value="G-alpha"/>
    <property type="match status" value="1"/>
</dbReference>
<dbReference type="FunFam" id="1.10.400.10:FF:000010">
    <property type="entry name" value="Guanine nucleotide-binding protein alpha-13 subunit"/>
    <property type="match status" value="1"/>
</dbReference>
<dbReference type="FunFam" id="3.40.50.300:FF:000692">
    <property type="entry name" value="Guanine nucleotide-binding protein subunit alpha"/>
    <property type="match status" value="1"/>
</dbReference>
<dbReference type="Gene3D" id="1.10.400.10">
    <property type="entry name" value="GI Alpha 1, domain 2-like"/>
    <property type="match status" value="1"/>
</dbReference>
<dbReference type="Gene3D" id="3.40.50.300">
    <property type="entry name" value="P-loop containing nucleotide triphosphate hydrolases"/>
    <property type="match status" value="1"/>
</dbReference>
<dbReference type="InterPro" id="IPR001019">
    <property type="entry name" value="Gprotein_alpha_su"/>
</dbReference>
<dbReference type="InterPro" id="IPR011025">
    <property type="entry name" value="GproteinA_insert"/>
</dbReference>
<dbReference type="InterPro" id="IPR027417">
    <property type="entry name" value="P-loop_NTPase"/>
</dbReference>
<dbReference type="PANTHER" id="PTHR10218">
    <property type="entry name" value="GTP-BINDING PROTEIN ALPHA SUBUNIT"/>
    <property type="match status" value="1"/>
</dbReference>
<dbReference type="PANTHER" id="PTHR10218:SF210">
    <property type="entry name" value="GUANINE NUCLEOTIDE-BINDING PROTEIN ALPHA-13 SUBUNIT"/>
    <property type="match status" value="1"/>
</dbReference>
<dbReference type="Pfam" id="PF00503">
    <property type="entry name" value="G-alpha"/>
    <property type="match status" value="1"/>
</dbReference>
<dbReference type="PRINTS" id="PR00318">
    <property type="entry name" value="GPROTEINA"/>
</dbReference>
<dbReference type="SMART" id="SM00275">
    <property type="entry name" value="G_alpha"/>
    <property type="match status" value="1"/>
</dbReference>
<dbReference type="SUPFAM" id="SSF52540">
    <property type="entry name" value="P-loop containing nucleoside triphosphate hydrolases"/>
    <property type="match status" value="1"/>
</dbReference>
<dbReference type="SUPFAM" id="SSF47895">
    <property type="entry name" value="Transducin (alpha subunit), insertion domain"/>
    <property type="match status" value="1"/>
</dbReference>
<dbReference type="PROSITE" id="PS51882">
    <property type="entry name" value="G_ALPHA"/>
    <property type="match status" value="1"/>
</dbReference>
<organism>
    <name type="scientific">Caenorhabditis elegans</name>
    <dbReference type="NCBI Taxonomy" id="6239"/>
    <lineage>
        <taxon>Eukaryota</taxon>
        <taxon>Metazoa</taxon>
        <taxon>Ecdysozoa</taxon>
        <taxon>Nematoda</taxon>
        <taxon>Chromadorea</taxon>
        <taxon>Rhabditida</taxon>
        <taxon>Rhabditina</taxon>
        <taxon>Rhabditomorpha</taxon>
        <taxon>Rhabditoidea</taxon>
        <taxon>Rhabditidae</taxon>
        <taxon>Peloderinae</taxon>
        <taxon>Caenorhabditis</taxon>
    </lineage>
</organism>
<comment type="function">
    <text evidence="1">Guanine nucleotide-binding proteins (G proteins) are involved as modulators or transducers in various transmembrane signaling systems.</text>
</comment>
<comment type="subunit">
    <text evidence="1">G proteins are composed of 3 units; alpha, beta and gamma. The alpha chain contains the guanine nucleotide binding site (By similarity).</text>
</comment>
<comment type="interaction">
    <interactant intactId="EBI-6094254">
        <id>Q9XTB2</id>
    </interactant>
    <interactant intactId="EBI-315855">
        <id>G5EEM0</id>
        <label>nhr-114</label>
    </interactant>
    <organismsDiffer>false</organismsDiffer>
    <experiments>3</experiments>
</comment>
<comment type="similarity">
    <text evidence="4">Belongs to the G-alpha family.</text>
</comment>
<sequence>MGCNFSSQSKLQVPEIRASRSITPASQKSEDPYSHIRLLLLGSAESGKTTVLEQVRLLYKQHFTESEYFHRRAFIYHNIFKSIKALCRAMRMSDIQFADPINMGRAQSIIADEHGHYGLFSKDLAEKIKHIWNDKSMQKLYARRSQFNLNDSASYFLNNIDKINMVDYKPSERDLIMAYVPTCGVQNVIFTACNQSFQLFDIGGQKIDRRKWALQYEGIDAIFFCIAISEYDQVMSEDMVTNRLDDALNLLQSISEDPAFATTPIYLFLNEIDVFCEKLSVIPLSKYKPDFKGGDQDDAIDFMENLACEALGKRDRSLYRVYRCIAIDTQMMAELLSTVFKDIAKRKK</sequence>